<evidence type="ECO:0000255" key="1">
    <source>
        <dbReference type="HAMAP-Rule" id="MF_01218"/>
    </source>
</evidence>
<keyword id="KW-0021">Allosteric enzyme</keyword>
<keyword id="KW-0328">Glycosyltransferase</keyword>
<keyword id="KW-0342">GTP-binding</keyword>
<keyword id="KW-0460">Magnesium</keyword>
<keyword id="KW-0547">Nucleotide-binding</keyword>
<keyword id="KW-0808">Transferase</keyword>
<protein>
    <recommendedName>
        <fullName evidence="1">Uracil phosphoribosyltransferase</fullName>
        <ecNumber evidence="1">2.4.2.9</ecNumber>
    </recommendedName>
    <alternativeName>
        <fullName evidence="1">UMP pyrophosphorylase</fullName>
    </alternativeName>
    <alternativeName>
        <fullName evidence="1">UPRTase</fullName>
    </alternativeName>
</protein>
<gene>
    <name evidence="1" type="primary">upp</name>
    <name type="ordered locus">DMR_08390</name>
</gene>
<accession>C4XJX5</accession>
<organism>
    <name type="scientific">Solidesulfovibrio magneticus (strain ATCC 700980 / DSM 13731 / RS-1)</name>
    <name type="common">Desulfovibrio magneticus</name>
    <dbReference type="NCBI Taxonomy" id="573370"/>
    <lineage>
        <taxon>Bacteria</taxon>
        <taxon>Pseudomonadati</taxon>
        <taxon>Thermodesulfobacteriota</taxon>
        <taxon>Desulfovibrionia</taxon>
        <taxon>Desulfovibrionales</taxon>
        <taxon>Desulfovibrionaceae</taxon>
        <taxon>Solidesulfovibrio</taxon>
    </lineage>
</organism>
<comment type="function">
    <text evidence="1">Catalyzes the conversion of uracil and 5-phospho-alpha-D-ribose 1-diphosphate (PRPP) to UMP and diphosphate.</text>
</comment>
<comment type="catalytic activity">
    <reaction evidence="1">
        <text>UMP + diphosphate = 5-phospho-alpha-D-ribose 1-diphosphate + uracil</text>
        <dbReference type="Rhea" id="RHEA:13017"/>
        <dbReference type="ChEBI" id="CHEBI:17568"/>
        <dbReference type="ChEBI" id="CHEBI:33019"/>
        <dbReference type="ChEBI" id="CHEBI:57865"/>
        <dbReference type="ChEBI" id="CHEBI:58017"/>
        <dbReference type="EC" id="2.4.2.9"/>
    </reaction>
</comment>
<comment type="cofactor">
    <cofactor evidence="1">
        <name>Mg(2+)</name>
        <dbReference type="ChEBI" id="CHEBI:18420"/>
    </cofactor>
    <text evidence="1">Binds 1 Mg(2+) ion per subunit. The magnesium is bound as Mg-PRPP.</text>
</comment>
<comment type="activity regulation">
    <text evidence="1">Allosterically activated by GTP.</text>
</comment>
<comment type="pathway">
    <text evidence="1">Pyrimidine metabolism; UMP biosynthesis via salvage pathway; UMP from uracil: step 1/1.</text>
</comment>
<comment type="similarity">
    <text evidence="1">Belongs to the UPRTase family.</text>
</comment>
<name>UPP_SOLM1</name>
<feature type="chain" id="PRO_1000213928" description="Uracil phosphoribosyltransferase">
    <location>
        <begin position="1"/>
        <end position="208"/>
    </location>
</feature>
<feature type="binding site" evidence="1">
    <location>
        <position position="78"/>
    </location>
    <ligand>
        <name>5-phospho-alpha-D-ribose 1-diphosphate</name>
        <dbReference type="ChEBI" id="CHEBI:58017"/>
    </ligand>
</feature>
<feature type="binding site" evidence="1">
    <location>
        <position position="103"/>
    </location>
    <ligand>
        <name>5-phospho-alpha-D-ribose 1-diphosphate</name>
        <dbReference type="ChEBI" id="CHEBI:58017"/>
    </ligand>
</feature>
<feature type="binding site" evidence="1">
    <location>
        <begin position="130"/>
        <end position="138"/>
    </location>
    <ligand>
        <name>5-phospho-alpha-D-ribose 1-diphosphate</name>
        <dbReference type="ChEBI" id="CHEBI:58017"/>
    </ligand>
</feature>
<feature type="binding site" evidence="1">
    <location>
        <position position="193"/>
    </location>
    <ligand>
        <name>uracil</name>
        <dbReference type="ChEBI" id="CHEBI:17568"/>
    </ligand>
</feature>
<feature type="binding site" evidence="1">
    <location>
        <begin position="198"/>
        <end position="200"/>
    </location>
    <ligand>
        <name>uracil</name>
        <dbReference type="ChEBI" id="CHEBI:17568"/>
    </ligand>
</feature>
<feature type="binding site" evidence="1">
    <location>
        <position position="199"/>
    </location>
    <ligand>
        <name>5-phospho-alpha-D-ribose 1-diphosphate</name>
        <dbReference type="ChEBI" id="CHEBI:58017"/>
    </ligand>
</feature>
<proteinExistence type="inferred from homology"/>
<dbReference type="EC" id="2.4.2.9" evidence="1"/>
<dbReference type="EMBL" id="AP010904">
    <property type="protein sequence ID" value="BAH74330.1"/>
    <property type="molecule type" value="Genomic_DNA"/>
</dbReference>
<dbReference type="RefSeq" id="WP_012750404.1">
    <property type="nucleotide sequence ID" value="NC_012796.1"/>
</dbReference>
<dbReference type="SMR" id="C4XJX5"/>
<dbReference type="STRING" id="573370.DMR_08390"/>
<dbReference type="KEGG" id="dma:DMR_08390"/>
<dbReference type="eggNOG" id="COG0035">
    <property type="taxonomic scope" value="Bacteria"/>
</dbReference>
<dbReference type="HOGENOM" id="CLU_067096_2_2_7"/>
<dbReference type="OrthoDB" id="9781675at2"/>
<dbReference type="UniPathway" id="UPA00574">
    <property type="reaction ID" value="UER00636"/>
</dbReference>
<dbReference type="Proteomes" id="UP000009071">
    <property type="component" value="Chromosome"/>
</dbReference>
<dbReference type="GO" id="GO:0005525">
    <property type="term" value="F:GTP binding"/>
    <property type="evidence" value="ECO:0007669"/>
    <property type="project" value="UniProtKB-KW"/>
</dbReference>
<dbReference type="GO" id="GO:0000287">
    <property type="term" value="F:magnesium ion binding"/>
    <property type="evidence" value="ECO:0007669"/>
    <property type="project" value="UniProtKB-UniRule"/>
</dbReference>
<dbReference type="GO" id="GO:0004845">
    <property type="term" value="F:uracil phosphoribosyltransferase activity"/>
    <property type="evidence" value="ECO:0007669"/>
    <property type="project" value="UniProtKB-UniRule"/>
</dbReference>
<dbReference type="GO" id="GO:0044206">
    <property type="term" value="P:UMP salvage"/>
    <property type="evidence" value="ECO:0007669"/>
    <property type="project" value="UniProtKB-UniRule"/>
</dbReference>
<dbReference type="GO" id="GO:0006223">
    <property type="term" value="P:uracil salvage"/>
    <property type="evidence" value="ECO:0007669"/>
    <property type="project" value="InterPro"/>
</dbReference>
<dbReference type="CDD" id="cd06223">
    <property type="entry name" value="PRTases_typeI"/>
    <property type="match status" value="1"/>
</dbReference>
<dbReference type="FunFam" id="3.40.50.2020:FF:000003">
    <property type="entry name" value="Uracil phosphoribosyltransferase"/>
    <property type="match status" value="1"/>
</dbReference>
<dbReference type="Gene3D" id="3.40.50.2020">
    <property type="match status" value="1"/>
</dbReference>
<dbReference type="HAMAP" id="MF_01218_B">
    <property type="entry name" value="Upp_B"/>
    <property type="match status" value="1"/>
</dbReference>
<dbReference type="InterPro" id="IPR000836">
    <property type="entry name" value="PRibTrfase_dom"/>
</dbReference>
<dbReference type="InterPro" id="IPR029057">
    <property type="entry name" value="PRTase-like"/>
</dbReference>
<dbReference type="InterPro" id="IPR034332">
    <property type="entry name" value="Upp_B"/>
</dbReference>
<dbReference type="InterPro" id="IPR050054">
    <property type="entry name" value="UPRTase/APRTase"/>
</dbReference>
<dbReference type="InterPro" id="IPR005765">
    <property type="entry name" value="Ura_phspho_trans"/>
</dbReference>
<dbReference type="NCBIfam" id="NF001097">
    <property type="entry name" value="PRK00129.1"/>
    <property type="match status" value="1"/>
</dbReference>
<dbReference type="NCBIfam" id="TIGR01091">
    <property type="entry name" value="upp"/>
    <property type="match status" value="1"/>
</dbReference>
<dbReference type="PANTHER" id="PTHR32315">
    <property type="entry name" value="ADENINE PHOSPHORIBOSYLTRANSFERASE"/>
    <property type="match status" value="1"/>
</dbReference>
<dbReference type="PANTHER" id="PTHR32315:SF4">
    <property type="entry name" value="URACIL PHOSPHORIBOSYLTRANSFERASE, CHLOROPLASTIC"/>
    <property type="match status" value="1"/>
</dbReference>
<dbReference type="Pfam" id="PF14681">
    <property type="entry name" value="UPRTase"/>
    <property type="match status" value="1"/>
</dbReference>
<dbReference type="SUPFAM" id="SSF53271">
    <property type="entry name" value="PRTase-like"/>
    <property type="match status" value="1"/>
</dbReference>
<sequence>MPVTVVDHPLVRHKLGLLRENNISTKNFRELANEIGRLLTYEATKSLPTEKKTIHGWAGPVEVDQLVGKKITVVPILRAGLGMMDGVVDMIPGVKVSVVGMYRNEETLEPVRYYVKLAKKIHKRHAMILDPMLATGGTLVATINLLKEAGCRRIMGLFLVCAPEGLARLEKEHPDVEVYTAAIDERLNENGYILPGLGDAGDKIFGTK</sequence>
<reference key="1">
    <citation type="journal article" date="2009" name="Genome Res.">
        <title>Whole genome sequence of Desulfovibrio magneticus strain RS-1 revealed common gene clusters in magnetotactic bacteria.</title>
        <authorList>
            <person name="Nakazawa H."/>
            <person name="Arakaki A."/>
            <person name="Narita-Yamada S."/>
            <person name="Yashiro I."/>
            <person name="Jinno K."/>
            <person name="Aoki N."/>
            <person name="Tsuruyama A."/>
            <person name="Okamura Y."/>
            <person name="Tanikawa S."/>
            <person name="Fujita N."/>
            <person name="Takeyama H."/>
            <person name="Matsunaga T."/>
        </authorList>
    </citation>
    <scope>NUCLEOTIDE SEQUENCE [LARGE SCALE GENOMIC DNA]</scope>
    <source>
        <strain>ATCC 700980 / DSM 13731 / RS-1</strain>
    </source>
</reference>